<gene>
    <name evidence="1" type="primary">thrS</name>
    <name type="ordered locus">SSU98_1381</name>
</gene>
<keyword id="KW-0030">Aminoacyl-tRNA synthetase</keyword>
<keyword id="KW-0067">ATP-binding</keyword>
<keyword id="KW-0963">Cytoplasm</keyword>
<keyword id="KW-0436">Ligase</keyword>
<keyword id="KW-0479">Metal-binding</keyword>
<keyword id="KW-0547">Nucleotide-binding</keyword>
<keyword id="KW-0648">Protein biosynthesis</keyword>
<keyword id="KW-0694">RNA-binding</keyword>
<keyword id="KW-0820">tRNA-binding</keyword>
<keyword id="KW-0862">Zinc</keyword>
<proteinExistence type="inferred from homology"/>
<sequence>MIKITFPDGAVREYQAGVTTFEIAESISKSLAKKALAGKFNGKLIDTTRAIDEDGTLEIVMPDHDDALDILRHSAAHLFAQAARRLFPDIKLGVGPAIQDGFYYDTDNAAGQISNEDLPRIQEEMMKIVKENFPSERREVTKEEALEIFKNDPYKLELIHEHSDDEGGLTIYTQGEYVDLCRGPHVPSTGRIQIFELLNVAGAYWRGKSENPMMQRVYGTAWFDKKDLKAYLQMREEAKERDHRKLGKELDLFMISQEVGQGLPFWLPNGATIRRTLERYITDKELASGYQHVYTPPLASVELYKTSGHWEHYSEDMFPTMDMGDGEEFVLRPMNCPHHIQVYKNHVRSYRELPVRIAELGMMHRYEKSGALTGLQRVREMTLNDGHIFVTPEQIQEEFKKALQLIIDVYADFNLNDYRFRLSYRDPEDKEKYYDNDEMWENAQRMLKGAMDEMGVDYFEAEGEAAFYGPKLDIQVKTALGNEETLSTIQLDFLLPERFGLTYIGADGEEHRPVMIHRGVISTMERFTAILIETYKGAFPTWLAPTQVTMIPISVEAHLDYAWKVAKELQDRGVRVHVDERNEKMQYKIRQSQTSKIPYQLIVGDKEMEDNAVNVRRYGSKATQTQSVSEFVDHILADIARKSRPAEAAE</sequence>
<evidence type="ECO:0000255" key="1">
    <source>
        <dbReference type="HAMAP-Rule" id="MF_00184"/>
    </source>
</evidence>
<evidence type="ECO:0000255" key="2">
    <source>
        <dbReference type="PROSITE-ProRule" id="PRU01228"/>
    </source>
</evidence>
<accession>A4W2F0</accession>
<comment type="function">
    <text evidence="1">Catalyzes the attachment of threonine to tRNA(Thr) in a two-step reaction: L-threonine is first activated by ATP to form Thr-AMP and then transferred to the acceptor end of tRNA(Thr). Also edits incorrectly charged L-seryl-tRNA(Thr).</text>
</comment>
<comment type="catalytic activity">
    <reaction evidence="1">
        <text>tRNA(Thr) + L-threonine + ATP = L-threonyl-tRNA(Thr) + AMP + diphosphate + H(+)</text>
        <dbReference type="Rhea" id="RHEA:24624"/>
        <dbReference type="Rhea" id="RHEA-COMP:9670"/>
        <dbReference type="Rhea" id="RHEA-COMP:9704"/>
        <dbReference type="ChEBI" id="CHEBI:15378"/>
        <dbReference type="ChEBI" id="CHEBI:30616"/>
        <dbReference type="ChEBI" id="CHEBI:33019"/>
        <dbReference type="ChEBI" id="CHEBI:57926"/>
        <dbReference type="ChEBI" id="CHEBI:78442"/>
        <dbReference type="ChEBI" id="CHEBI:78534"/>
        <dbReference type="ChEBI" id="CHEBI:456215"/>
        <dbReference type="EC" id="6.1.1.3"/>
    </reaction>
</comment>
<comment type="cofactor">
    <cofactor evidence="1">
        <name>Zn(2+)</name>
        <dbReference type="ChEBI" id="CHEBI:29105"/>
    </cofactor>
    <text evidence="1">Binds 1 zinc ion per subunit.</text>
</comment>
<comment type="subunit">
    <text evidence="1">Homodimer.</text>
</comment>
<comment type="subcellular location">
    <subcellularLocation>
        <location evidence="1">Cytoplasm</location>
    </subcellularLocation>
</comment>
<comment type="similarity">
    <text evidence="1">Belongs to the class-II aminoacyl-tRNA synthetase family.</text>
</comment>
<protein>
    <recommendedName>
        <fullName evidence="1">Threonine--tRNA ligase</fullName>
        <ecNumber evidence="1">6.1.1.3</ecNumber>
    </recommendedName>
    <alternativeName>
        <fullName evidence="1">Threonyl-tRNA synthetase</fullName>
        <shortName evidence="1">ThrRS</shortName>
    </alternativeName>
</protein>
<organism>
    <name type="scientific">Streptococcus suis (strain 98HAH33)</name>
    <dbReference type="NCBI Taxonomy" id="391296"/>
    <lineage>
        <taxon>Bacteria</taxon>
        <taxon>Bacillati</taxon>
        <taxon>Bacillota</taxon>
        <taxon>Bacilli</taxon>
        <taxon>Lactobacillales</taxon>
        <taxon>Streptococcaceae</taxon>
        <taxon>Streptococcus</taxon>
    </lineage>
</organism>
<feature type="chain" id="PRO_1000020533" description="Threonine--tRNA ligase">
    <location>
        <begin position="1"/>
        <end position="650"/>
    </location>
</feature>
<feature type="domain" description="TGS" evidence="2">
    <location>
        <begin position="1"/>
        <end position="61"/>
    </location>
</feature>
<feature type="region of interest" description="Catalytic" evidence="1">
    <location>
        <begin position="242"/>
        <end position="540"/>
    </location>
</feature>
<feature type="binding site" evidence="1">
    <location>
        <position position="336"/>
    </location>
    <ligand>
        <name>Zn(2+)</name>
        <dbReference type="ChEBI" id="CHEBI:29105"/>
    </ligand>
</feature>
<feature type="binding site" evidence="1">
    <location>
        <position position="387"/>
    </location>
    <ligand>
        <name>Zn(2+)</name>
        <dbReference type="ChEBI" id="CHEBI:29105"/>
    </ligand>
</feature>
<feature type="binding site" evidence="1">
    <location>
        <position position="517"/>
    </location>
    <ligand>
        <name>Zn(2+)</name>
        <dbReference type="ChEBI" id="CHEBI:29105"/>
    </ligand>
</feature>
<name>SYT_STRS2</name>
<dbReference type="EC" id="6.1.1.3" evidence="1"/>
<dbReference type="EMBL" id="CP000408">
    <property type="protein sequence ID" value="ABP92539.1"/>
    <property type="molecule type" value="Genomic_DNA"/>
</dbReference>
<dbReference type="SMR" id="A4W2F0"/>
<dbReference type="KEGG" id="ssv:SSU98_1381"/>
<dbReference type="HOGENOM" id="CLU_008554_0_1_9"/>
<dbReference type="GO" id="GO:0005737">
    <property type="term" value="C:cytoplasm"/>
    <property type="evidence" value="ECO:0007669"/>
    <property type="project" value="UniProtKB-SubCell"/>
</dbReference>
<dbReference type="GO" id="GO:0005524">
    <property type="term" value="F:ATP binding"/>
    <property type="evidence" value="ECO:0007669"/>
    <property type="project" value="UniProtKB-UniRule"/>
</dbReference>
<dbReference type="GO" id="GO:0140096">
    <property type="term" value="F:catalytic activity, acting on a protein"/>
    <property type="evidence" value="ECO:0007669"/>
    <property type="project" value="UniProtKB-ARBA"/>
</dbReference>
<dbReference type="GO" id="GO:0046872">
    <property type="term" value="F:metal ion binding"/>
    <property type="evidence" value="ECO:0007669"/>
    <property type="project" value="UniProtKB-KW"/>
</dbReference>
<dbReference type="GO" id="GO:0004829">
    <property type="term" value="F:threonine-tRNA ligase activity"/>
    <property type="evidence" value="ECO:0007669"/>
    <property type="project" value="UniProtKB-UniRule"/>
</dbReference>
<dbReference type="GO" id="GO:0016740">
    <property type="term" value="F:transferase activity"/>
    <property type="evidence" value="ECO:0007669"/>
    <property type="project" value="UniProtKB-ARBA"/>
</dbReference>
<dbReference type="GO" id="GO:0000049">
    <property type="term" value="F:tRNA binding"/>
    <property type="evidence" value="ECO:0007669"/>
    <property type="project" value="UniProtKB-KW"/>
</dbReference>
<dbReference type="GO" id="GO:0006435">
    <property type="term" value="P:threonyl-tRNA aminoacylation"/>
    <property type="evidence" value="ECO:0007669"/>
    <property type="project" value="UniProtKB-UniRule"/>
</dbReference>
<dbReference type="CDD" id="cd01667">
    <property type="entry name" value="TGS_ThrRS"/>
    <property type="match status" value="1"/>
</dbReference>
<dbReference type="CDD" id="cd00860">
    <property type="entry name" value="ThrRS_anticodon"/>
    <property type="match status" value="1"/>
</dbReference>
<dbReference type="CDD" id="cd00771">
    <property type="entry name" value="ThrRS_core"/>
    <property type="match status" value="1"/>
</dbReference>
<dbReference type="FunFam" id="3.10.20.30:FF:000005">
    <property type="entry name" value="Threonine--tRNA ligase"/>
    <property type="match status" value="1"/>
</dbReference>
<dbReference type="FunFam" id="3.30.54.20:FF:000002">
    <property type="entry name" value="Threonine--tRNA ligase"/>
    <property type="match status" value="1"/>
</dbReference>
<dbReference type="FunFam" id="3.30.930.10:FF:000002">
    <property type="entry name" value="Threonine--tRNA ligase"/>
    <property type="match status" value="1"/>
</dbReference>
<dbReference type="FunFam" id="3.40.50.800:FF:000001">
    <property type="entry name" value="Threonine--tRNA ligase"/>
    <property type="match status" value="1"/>
</dbReference>
<dbReference type="FunFam" id="3.30.980.10:FF:000005">
    <property type="entry name" value="Threonyl-tRNA synthetase, mitochondrial"/>
    <property type="match status" value="1"/>
</dbReference>
<dbReference type="Gene3D" id="3.10.20.30">
    <property type="match status" value="1"/>
</dbReference>
<dbReference type="Gene3D" id="3.30.54.20">
    <property type="match status" value="1"/>
</dbReference>
<dbReference type="Gene3D" id="3.40.50.800">
    <property type="entry name" value="Anticodon-binding domain"/>
    <property type="match status" value="1"/>
</dbReference>
<dbReference type="Gene3D" id="3.30.930.10">
    <property type="entry name" value="Bira Bifunctional Protein, Domain 2"/>
    <property type="match status" value="1"/>
</dbReference>
<dbReference type="Gene3D" id="3.30.980.10">
    <property type="entry name" value="Threonyl-trna Synthetase, Chain A, domain 2"/>
    <property type="match status" value="1"/>
</dbReference>
<dbReference type="HAMAP" id="MF_00184">
    <property type="entry name" value="Thr_tRNA_synth"/>
    <property type="match status" value="1"/>
</dbReference>
<dbReference type="InterPro" id="IPR002314">
    <property type="entry name" value="aa-tRNA-synt_IIb"/>
</dbReference>
<dbReference type="InterPro" id="IPR006195">
    <property type="entry name" value="aa-tRNA-synth_II"/>
</dbReference>
<dbReference type="InterPro" id="IPR045864">
    <property type="entry name" value="aa-tRNA-synth_II/BPL/LPL"/>
</dbReference>
<dbReference type="InterPro" id="IPR004154">
    <property type="entry name" value="Anticodon-bd"/>
</dbReference>
<dbReference type="InterPro" id="IPR036621">
    <property type="entry name" value="Anticodon-bd_dom_sf"/>
</dbReference>
<dbReference type="InterPro" id="IPR012675">
    <property type="entry name" value="Beta-grasp_dom_sf"/>
</dbReference>
<dbReference type="InterPro" id="IPR004095">
    <property type="entry name" value="TGS"/>
</dbReference>
<dbReference type="InterPro" id="IPR012676">
    <property type="entry name" value="TGS-like"/>
</dbReference>
<dbReference type="InterPro" id="IPR002320">
    <property type="entry name" value="Thr-tRNA-ligase_IIa"/>
</dbReference>
<dbReference type="InterPro" id="IPR018163">
    <property type="entry name" value="Thr/Ala-tRNA-synth_IIc_edit"/>
</dbReference>
<dbReference type="InterPro" id="IPR047246">
    <property type="entry name" value="ThrRS_anticodon"/>
</dbReference>
<dbReference type="InterPro" id="IPR033728">
    <property type="entry name" value="ThrRS_core"/>
</dbReference>
<dbReference type="InterPro" id="IPR012947">
    <property type="entry name" value="tRNA_SAD"/>
</dbReference>
<dbReference type="NCBIfam" id="TIGR00418">
    <property type="entry name" value="thrS"/>
    <property type="match status" value="1"/>
</dbReference>
<dbReference type="PANTHER" id="PTHR11451:SF56">
    <property type="entry name" value="THREONINE--TRNA LIGASE 1"/>
    <property type="match status" value="1"/>
</dbReference>
<dbReference type="PANTHER" id="PTHR11451">
    <property type="entry name" value="THREONINE-TRNA LIGASE"/>
    <property type="match status" value="1"/>
</dbReference>
<dbReference type="Pfam" id="PF03129">
    <property type="entry name" value="HGTP_anticodon"/>
    <property type="match status" value="1"/>
</dbReference>
<dbReference type="Pfam" id="PF02824">
    <property type="entry name" value="TGS"/>
    <property type="match status" value="1"/>
</dbReference>
<dbReference type="Pfam" id="PF00587">
    <property type="entry name" value="tRNA-synt_2b"/>
    <property type="match status" value="1"/>
</dbReference>
<dbReference type="Pfam" id="PF07973">
    <property type="entry name" value="tRNA_SAD"/>
    <property type="match status" value="1"/>
</dbReference>
<dbReference type="PRINTS" id="PR01047">
    <property type="entry name" value="TRNASYNTHTHR"/>
</dbReference>
<dbReference type="SMART" id="SM00863">
    <property type="entry name" value="tRNA_SAD"/>
    <property type="match status" value="1"/>
</dbReference>
<dbReference type="SUPFAM" id="SSF52954">
    <property type="entry name" value="Class II aaRS ABD-related"/>
    <property type="match status" value="1"/>
</dbReference>
<dbReference type="SUPFAM" id="SSF55681">
    <property type="entry name" value="Class II aaRS and biotin synthetases"/>
    <property type="match status" value="1"/>
</dbReference>
<dbReference type="SUPFAM" id="SSF81271">
    <property type="entry name" value="TGS-like"/>
    <property type="match status" value="1"/>
</dbReference>
<dbReference type="SUPFAM" id="SSF55186">
    <property type="entry name" value="ThrRS/AlaRS common domain"/>
    <property type="match status" value="1"/>
</dbReference>
<dbReference type="PROSITE" id="PS50862">
    <property type="entry name" value="AA_TRNA_LIGASE_II"/>
    <property type="match status" value="1"/>
</dbReference>
<dbReference type="PROSITE" id="PS51880">
    <property type="entry name" value="TGS"/>
    <property type="match status" value="1"/>
</dbReference>
<reference key="1">
    <citation type="journal article" date="2007" name="PLoS ONE">
        <title>A glimpse of streptococcal toxic shock syndrome from comparative genomics of S. suis 2 Chinese isolates.</title>
        <authorList>
            <person name="Chen C."/>
            <person name="Tang J."/>
            <person name="Dong W."/>
            <person name="Wang C."/>
            <person name="Feng Y."/>
            <person name="Wang J."/>
            <person name="Zheng F."/>
            <person name="Pan X."/>
            <person name="Liu D."/>
            <person name="Li M."/>
            <person name="Song Y."/>
            <person name="Zhu X."/>
            <person name="Sun H."/>
            <person name="Feng T."/>
            <person name="Guo Z."/>
            <person name="Ju A."/>
            <person name="Ge J."/>
            <person name="Dong Y."/>
            <person name="Sun W."/>
            <person name="Jiang Y."/>
            <person name="Wang J."/>
            <person name="Yan J."/>
            <person name="Yang H."/>
            <person name="Wang X."/>
            <person name="Gao G.F."/>
            <person name="Yang R."/>
            <person name="Wang J."/>
            <person name="Yu J."/>
        </authorList>
    </citation>
    <scope>NUCLEOTIDE SEQUENCE [LARGE SCALE GENOMIC DNA]</scope>
    <source>
        <strain>98HAH33</strain>
    </source>
</reference>